<comment type="similarity">
    <text evidence="1">Belongs to the bacterial ribosomal protein bL36 family.</text>
</comment>
<dbReference type="EMBL" id="CP000013">
    <property type="protein sequence ID" value="AAU07350.1"/>
    <property type="molecule type" value="Genomic_DNA"/>
</dbReference>
<dbReference type="RefSeq" id="WP_004790059.1">
    <property type="nucleotide sequence ID" value="NZ_CP028872.1"/>
</dbReference>
<dbReference type="SMR" id="Q661C1"/>
<dbReference type="GeneID" id="83865974"/>
<dbReference type="KEGG" id="bga:BG0511"/>
<dbReference type="eggNOG" id="COG0257">
    <property type="taxonomic scope" value="Bacteria"/>
</dbReference>
<dbReference type="HOGENOM" id="CLU_135723_6_2_12"/>
<dbReference type="OrthoDB" id="9802520at2"/>
<dbReference type="Proteomes" id="UP000002276">
    <property type="component" value="Chromosome"/>
</dbReference>
<dbReference type="GO" id="GO:0005737">
    <property type="term" value="C:cytoplasm"/>
    <property type="evidence" value="ECO:0007669"/>
    <property type="project" value="UniProtKB-ARBA"/>
</dbReference>
<dbReference type="GO" id="GO:1990904">
    <property type="term" value="C:ribonucleoprotein complex"/>
    <property type="evidence" value="ECO:0007669"/>
    <property type="project" value="UniProtKB-KW"/>
</dbReference>
<dbReference type="GO" id="GO:0005840">
    <property type="term" value="C:ribosome"/>
    <property type="evidence" value="ECO:0007669"/>
    <property type="project" value="UniProtKB-KW"/>
</dbReference>
<dbReference type="GO" id="GO:0003735">
    <property type="term" value="F:structural constituent of ribosome"/>
    <property type="evidence" value="ECO:0007669"/>
    <property type="project" value="InterPro"/>
</dbReference>
<dbReference type="GO" id="GO:0006412">
    <property type="term" value="P:translation"/>
    <property type="evidence" value="ECO:0007669"/>
    <property type="project" value="UniProtKB-UniRule"/>
</dbReference>
<dbReference type="HAMAP" id="MF_00251">
    <property type="entry name" value="Ribosomal_bL36"/>
    <property type="match status" value="1"/>
</dbReference>
<dbReference type="InterPro" id="IPR000473">
    <property type="entry name" value="Ribosomal_bL36"/>
</dbReference>
<dbReference type="InterPro" id="IPR035977">
    <property type="entry name" value="Ribosomal_bL36_sp"/>
</dbReference>
<dbReference type="NCBIfam" id="TIGR01022">
    <property type="entry name" value="rpmJ_bact"/>
    <property type="match status" value="1"/>
</dbReference>
<dbReference type="PANTHER" id="PTHR42888">
    <property type="entry name" value="50S RIBOSOMAL PROTEIN L36, CHLOROPLASTIC"/>
    <property type="match status" value="1"/>
</dbReference>
<dbReference type="PANTHER" id="PTHR42888:SF1">
    <property type="entry name" value="LARGE RIBOSOMAL SUBUNIT PROTEIN BL36C"/>
    <property type="match status" value="1"/>
</dbReference>
<dbReference type="Pfam" id="PF00444">
    <property type="entry name" value="Ribosomal_L36"/>
    <property type="match status" value="1"/>
</dbReference>
<dbReference type="SUPFAM" id="SSF57840">
    <property type="entry name" value="Ribosomal protein L36"/>
    <property type="match status" value="1"/>
</dbReference>
<dbReference type="PROSITE" id="PS00828">
    <property type="entry name" value="RIBOSOMAL_L36"/>
    <property type="match status" value="1"/>
</dbReference>
<feature type="chain" id="PRO_0000126155" description="Large ribosomal subunit protein bL36">
    <location>
        <begin position="1"/>
        <end position="37"/>
    </location>
</feature>
<evidence type="ECO:0000255" key="1">
    <source>
        <dbReference type="HAMAP-Rule" id="MF_00251"/>
    </source>
</evidence>
<evidence type="ECO:0000305" key="2"/>
<gene>
    <name evidence="1" type="primary">rpmJ</name>
    <name type="ordered locus">BG0511</name>
</gene>
<sequence>MKVRASVKPICEKCKVIKRKGVLRIICDNLKHKQRQK</sequence>
<name>RL36_BORGP</name>
<protein>
    <recommendedName>
        <fullName evidence="1">Large ribosomal subunit protein bL36</fullName>
    </recommendedName>
    <alternativeName>
        <fullName evidence="2">50S ribosomal protein L36</fullName>
    </alternativeName>
</protein>
<organism>
    <name type="scientific">Borrelia garinii subsp. bavariensis (strain ATCC BAA-2496 / DSM 23469 / PBi)</name>
    <name type="common">Borreliella bavariensis</name>
    <dbReference type="NCBI Taxonomy" id="290434"/>
    <lineage>
        <taxon>Bacteria</taxon>
        <taxon>Pseudomonadati</taxon>
        <taxon>Spirochaetota</taxon>
        <taxon>Spirochaetia</taxon>
        <taxon>Spirochaetales</taxon>
        <taxon>Borreliaceae</taxon>
        <taxon>Borreliella</taxon>
    </lineage>
</organism>
<proteinExistence type="inferred from homology"/>
<accession>Q661C1</accession>
<keyword id="KW-0687">Ribonucleoprotein</keyword>
<keyword id="KW-0689">Ribosomal protein</keyword>
<reference key="1">
    <citation type="journal article" date="2004" name="Nucleic Acids Res.">
        <title>Comparative analysis of the Borrelia garinii genome.</title>
        <authorList>
            <person name="Gloeckner G."/>
            <person name="Lehmann R."/>
            <person name="Romualdi A."/>
            <person name="Pradella S."/>
            <person name="Schulte-Spechtel U."/>
            <person name="Schilhabel M."/>
            <person name="Wilske B."/>
            <person name="Suehnel J."/>
            <person name="Platzer M."/>
        </authorList>
    </citation>
    <scope>NUCLEOTIDE SEQUENCE [LARGE SCALE GENOMIC DNA]</scope>
    <source>
        <strain>ATCC BAA-2496 / DSM 23469 / PBi</strain>
    </source>
</reference>